<organism>
    <name type="scientific">Serratia marcescens</name>
    <dbReference type="NCBI Taxonomy" id="615"/>
    <lineage>
        <taxon>Bacteria</taxon>
        <taxon>Pseudomonadati</taxon>
        <taxon>Pseudomonadota</taxon>
        <taxon>Gammaproteobacteria</taxon>
        <taxon>Enterobacterales</taxon>
        <taxon>Yersiniaceae</taxon>
        <taxon>Serratia</taxon>
    </lineage>
</organism>
<reference key="1">
    <citation type="journal article" date="1989" name="Nucleic Acids Res.">
        <title>Cloning, characterization and heterologous expression of the SmaI restriction-modification system.</title>
        <authorList>
            <person name="Heidmann S."/>
            <person name="Seifert W."/>
            <person name="Kessler C."/>
            <person name="Domdey H."/>
        </authorList>
    </citation>
    <scope>NUCLEOTIDE SEQUENCE [GENOMIC DNA]</scope>
    <scope>FUNCTION</scope>
    <scope>CATALYTIC ACTIVITY</scope>
    <source>
        <strain>BMTU 1373</strain>
    </source>
</reference>
<reference key="2">
    <citation type="submission" date="1992-08" db="EMBL/GenBank/DDBJ databases">
        <title>Characterization of the SmaI restriction and modification enzymes.</title>
        <authorList>
            <person name="Dunbar J.C."/>
            <person name="Withers B."/>
        </authorList>
    </citation>
    <scope>NUCLEOTIDE SEQUENCE [GENOMIC DNA]</scope>
</reference>
<reference key="3">
    <citation type="journal article" date="2003" name="Nucleic Acids Res.">
        <title>A nomenclature for restriction enzymes, DNA methyltransferases, homing endonucleases and their genes.</title>
        <authorList>
            <person name="Roberts R.J."/>
            <person name="Belfort M."/>
            <person name="Bestor T."/>
            <person name="Bhagwat A.S."/>
            <person name="Bickle T.A."/>
            <person name="Bitinaite J."/>
            <person name="Blumenthal R.M."/>
            <person name="Degtyarev S.K."/>
            <person name="Dryden D.T."/>
            <person name="Dybvig K."/>
            <person name="Firman K."/>
            <person name="Gromova E.S."/>
            <person name="Gumport R.I."/>
            <person name="Halford S.E."/>
            <person name="Hattman S."/>
            <person name="Heitman J."/>
            <person name="Hornby D.P."/>
            <person name="Janulaitis A."/>
            <person name="Jeltsch A."/>
            <person name="Josephsen J."/>
            <person name="Kiss A."/>
            <person name="Klaenhammer T.R."/>
            <person name="Kobayashi I."/>
            <person name="Kong H."/>
            <person name="Krueger D.H."/>
            <person name="Lacks S."/>
            <person name="Marinus M.G."/>
            <person name="Miyahara M."/>
            <person name="Morgan R.D."/>
            <person name="Murray N.E."/>
            <person name="Nagaraja V."/>
            <person name="Piekarowicz A."/>
            <person name="Pingoud A."/>
            <person name="Raleigh E."/>
            <person name="Rao D.N."/>
            <person name="Reich N."/>
            <person name="Repin V.E."/>
            <person name="Selker E.U."/>
            <person name="Shaw P.C."/>
            <person name="Stein D.C."/>
            <person name="Stoddard B.L."/>
            <person name="Szybalski W."/>
            <person name="Trautner T.A."/>
            <person name="Van Etten J.L."/>
            <person name="Vitor J.M."/>
            <person name="Wilson G.G."/>
            <person name="Xu S.Y."/>
        </authorList>
    </citation>
    <scope>NOMENCLATURE</scope>
    <scope>SUBTYPE</scope>
</reference>
<feature type="chain" id="PRO_0000077362" description="Type II restriction enzyme SmaI">
    <location>
        <begin position="1"/>
        <end position="247"/>
    </location>
</feature>
<comment type="function">
    <text evidence="1 2">A P subtype restriction enzyme that recognizes the double-stranded sequence 5'-CCCGGG-3' and cleaves after C-3.</text>
</comment>
<comment type="catalytic activity">
    <reaction evidence="1">
        <text>Endonucleolytic cleavage of DNA to give specific double-stranded fragments with terminal 5'-phosphates.</text>
        <dbReference type="EC" id="3.1.21.4"/>
    </reaction>
</comment>
<comment type="cofactor">
    <cofactor>
        <name>Mg(2+)</name>
        <dbReference type="ChEBI" id="CHEBI:18420"/>
    </cofactor>
</comment>
<comment type="cofactor">
    <cofactor>
        <name>K(+)</name>
        <dbReference type="ChEBI" id="CHEBI:29103"/>
    </cofactor>
</comment>
<protein>
    <recommendedName>
        <fullName evidence="4">Type II restriction enzyme SmaI</fullName>
        <shortName evidence="3">R.SmaI</shortName>
        <ecNumber evidence="1">3.1.21.4</ecNumber>
    </recommendedName>
    <alternativeName>
        <fullName>Endonuclease SmaI</fullName>
    </alternativeName>
    <alternativeName>
        <fullName>Type-2 restriction enzyme SmaI</fullName>
    </alternativeName>
</protein>
<evidence type="ECO:0000269" key="1">
    <source>
    </source>
</evidence>
<evidence type="ECO:0000303" key="2">
    <source>
    </source>
</evidence>
<evidence type="ECO:0000303" key="3">
    <source>
    </source>
</evidence>
<evidence type="ECO:0000303" key="4">
    <source ref="2"/>
</evidence>
<dbReference type="EC" id="3.1.21.4" evidence="1"/>
<dbReference type="EMBL" id="X16458">
    <property type="protein sequence ID" value="CAA34478.1"/>
    <property type="molecule type" value="Genomic_DNA"/>
</dbReference>
<dbReference type="EMBL" id="M98769">
    <property type="protein sequence ID" value="AAA26569.1"/>
    <property type="molecule type" value="Genomic_DNA"/>
</dbReference>
<dbReference type="PIR" id="S06035">
    <property type="entry name" value="S06035"/>
</dbReference>
<dbReference type="RefSeq" id="WP_131164851.1">
    <property type="nucleotide sequence ID" value="NZ_SDUW01000003.1"/>
</dbReference>
<dbReference type="REBASE" id="1704">
    <property type="entry name" value="SmaI"/>
</dbReference>
<dbReference type="BRENDA" id="3.1.21.4">
    <property type="organism ID" value="5690"/>
</dbReference>
<dbReference type="PRO" id="PR:P14229"/>
<dbReference type="GO" id="GO:0009036">
    <property type="term" value="F:type II site-specific deoxyribonuclease activity"/>
    <property type="evidence" value="ECO:0007669"/>
    <property type="project" value="UniProtKB-EC"/>
</dbReference>
<dbReference type="GO" id="GO:0009307">
    <property type="term" value="P:DNA restriction-modification system"/>
    <property type="evidence" value="ECO:0007669"/>
    <property type="project" value="UniProtKB-KW"/>
</dbReference>
<dbReference type="InterPro" id="IPR049519">
    <property type="entry name" value="SmaI"/>
</dbReference>
<dbReference type="Pfam" id="PF17411">
    <property type="entry name" value="SmaI"/>
    <property type="match status" value="1"/>
</dbReference>
<name>T2SM_SERMA</name>
<sequence>MSRDDQLFTLWGKLNDRQKDNFLKWMKAFDVEKTYQKTSGDIFNDDFFDIFGDRLITHHFSSTQALTKTLFEHAFNDSLNESGVISSLAESRTNPGHDITIDSIKVALKTEAAKNISKSYIHVSKWMELGKGEWILELLLERFLEHLENYERIFTLRYFKISEYKFSYQLVEIPKSLLLEAKNAKLEIMSGSKQSPKPGYGYVLDENENKKFSLYFDGGAERKLQIKHLNLEHCIVHGVWDFILPPP</sequence>
<gene>
    <name type="primary">smaIR</name>
</gene>
<proteinExistence type="evidence at protein level"/>
<keyword id="KW-0255">Endonuclease</keyword>
<keyword id="KW-0378">Hydrolase</keyword>
<keyword id="KW-0460">Magnesium</keyword>
<keyword id="KW-0540">Nuclease</keyword>
<keyword id="KW-0680">Restriction system</keyword>
<accession>P14229</accession>